<evidence type="ECO:0000255" key="1">
    <source>
        <dbReference type="HAMAP-Rule" id="MF_00765"/>
    </source>
</evidence>
<reference key="1">
    <citation type="journal article" date="2008" name="PLoS ONE">
        <title>Genome biology of Actinobacillus pleuropneumoniae JL03, an isolate of serotype 3 prevalent in China.</title>
        <authorList>
            <person name="Xu Z."/>
            <person name="Zhou Y."/>
            <person name="Li L."/>
            <person name="Zhou R."/>
            <person name="Xiao S."/>
            <person name="Wan Y."/>
            <person name="Zhang S."/>
            <person name="Wang K."/>
            <person name="Li W."/>
            <person name="Li L."/>
            <person name="Jin H."/>
            <person name="Kang M."/>
            <person name="Dalai B."/>
            <person name="Li T."/>
            <person name="Liu L."/>
            <person name="Cheng Y."/>
            <person name="Zhang L."/>
            <person name="Xu T."/>
            <person name="Zheng H."/>
            <person name="Pu S."/>
            <person name="Wang B."/>
            <person name="Gu W."/>
            <person name="Zhang X.L."/>
            <person name="Zhu G.-F."/>
            <person name="Wang S."/>
            <person name="Zhao G.-P."/>
            <person name="Chen H."/>
        </authorList>
    </citation>
    <scope>NUCLEOTIDE SEQUENCE [LARGE SCALE GENOMIC DNA]</scope>
    <source>
        <strain>JL03</strain>
    </source>
</reference>
<protein>
    <recommendedName>
        <fullName evidence="1">Dual-action ribosomal maturation protein DarP</fullName>
    </recommendedName>
    <alternativeName>
        <fullName evidence="1">Large ribosomal subunit assembly factor DarP</fullName>
    </alternativeName>
</protein>
<dbReference type="EMBL" id="CP000687">
    <property type="protein sequence ID" value="ABY69295.1"/>
    <property type="molecule type" value="Genomic_DNA"/>
</dbReference>
<dbReference type="SMR" id="B0BP10"/>
<dbReference type="KEGG" id="apj:APJL_0732"/>
<dbReference type="HOGENOM" id="CLU_106757_2_0_6"/>
<dbReference type="Proteomes" id="UP000008547">
    <property type="component" value="Chromosome"/>
</dbReference>
<dbReference type="GO" id="GO:0005829">
    <property type="term" value="C:cytosol"/>
    <property type="evidence" value="ECO:0007669"/>
    <property type="project" value="TreeGrafter"/>
</dbReference>
<dbReference type="GO" id="GO:0043022">
    <property type="term" value="F:ribosome binding"/>
    <property type="evidence" value="ECO:0007669"/>
    <property type="project" value="UniProtKB-UniRule"/>
</dbReference>
<dbReference type="GO" id="GO:0019843">
    <property type="term" value="F:rRNA binding"/>
    <property type="evidence" value="ECO:0007669"/>
    <property type="project" value="UniProtKB-UniRule"/>
</dbReference>
<dbReference type="GO" id="GO:1902626">
    <property type="term" value="P:assembly of large subunit precursor of preribosome"/>
    <property type="evidence" value="ECO:0007669"/>
    <property type="project" value="UniProtKB-UniRule"/>
</dbReference>
<dbReference type="CDD" id="cd16331">
    <property type="entry name" value="YjgA-like"/>
    <property type="match status" value="1"/>
</dbReference>
<dbReference type="FunFam" id="1.10.60.30:FF:000001">
    <property type="entry name" value="UPF0307 protein YjgA"/>
    <property type="match status" value="1"/>
</dbReference>
<dbReference type="Gene3D" id="1.10.60.30">
    <property type="entry name" value="PSPTO4464-like domains"/>
    <property type="match status" value="2"/>
</dbReference>
<dbReference type="HAMAP" id="MF_00765">
    <property type="entry name" value="DarP"/>
    <property type="match status" value="1"/>
</dbReference>
<dbReference type="InterPro" id="IPR006839">
    <property type="entry name" value="DarP"/>
</dbReference>
<dbReference type="InterPro" id="IPR023153">
    <property type="entry name" value="DarP_sf"/>
</dbReference>
<dbReference type="NCBIfam" id="NF003593">
    <property type="entry name" value="PRK05255.1-1"/>
    <property type="match status" value="1"/>
</dbReference>
<dbReference type="PANTHER" id="PTHR38101">
    <property type="entry name" value="UPF0307 PROTEIN YJGA"/>
    <property type="match status" value="1"/>
</dbReference>
<dbReference type="PANTHER" id="PTHR38101:SF1">
    <property type="entry name" value="UPF0307 PROTEIN YJGA"/>
    <property type="match status" value="1"/>
</dbReference>
<dbReference type="Pfam" id="PF04751">
    <property type="entry name" value="DarP"/>
    <property type="match status" value="1"/>
</dbReference>
<dbReference type="PIRSF" id="PIRSF016183">
    <property type="entry name" value="UCP016183"/>
    <property type="match status" value="1"/>
</dbReference>
<dbReference type="SUPFAM" id="SSF158710">
    <property type="entry name" value="PSPTO4464-like"/>
    <property type="match status" value="1"/>
</dbReference>
<sequence>MAKKRSKNEIDWTDEEEEIIWVSKSEIKRDSEHLKKLGAELIELTPQNLEKIPLDDDLKDAIRQAQSFKLEARRRQIQFIGKLLRNRDPEPIQEALDKVKNRHNQQQALLHKLELVRDQLVNMGDSSLEHLLTEHPQLDRQHLRNLIRGAQKEREANKPPKNYREIFQYLKTEIAE</sequence>
<name>DARP_ACTPJ</name>
<organism>
    <name type="scientific">Actinobacillus pleuropneumoniae serotype 3 (strain JL03)</name>
    <dbReference type="NCBI Taxonomy" id="434271"/>
    <lineage>
        <taxon>Bacteria</taxon>
        <taxon>Pseudomonadati</taxon>
        <taxon>Pseudomonadota</taxon>
        <taxon>Gammaproteobacteria</taxon>
        <taxon>Pasteurellales</taxon>
        <taxon>Pasteurellaceae</taxon>
        <taxon>Actinobacillus</taxon>
    </lineage>
</organism>
<accession>B0BP10</accession>
<keyword id="KW-0963">Cytoplasm</keyword>
<keyword id="KW-0690">Ribosome biogenesis</keyword>
<keyword id="KW-0694">RNA-binding</keyword>
<keyword id="KW-0699">rRNA-binding</keyword>
<feature type="chain" id="PRO_1000198373" description="Dual-action ribosomal maturation protein DarP">
    <location>
        <begin position="1"/>
        <end position="176"/>
    </location>
</feature>
<comment type="function">
    <text evidence="1">Member of a network of 50S ribosomal subunit biogenesis factors which assembles along the 30S-50S interface, preventing incorrect 23S rRNA structures from forming. Promotes peptidyl transferase center (PTC) maturation.</text>
</comment>
<comment type="subcellular location">
    <subcellularLocation>
        <location evidence="1">Cytoplasm</location>
    </subcellularLocation>
    <text evidence="1">Associates with late stage pre-50S ribosomal subunits.</text>
</comment>
<comment type="similarity">
    <text evidence="1">Belongs to the DarP family.</text>
</comment>
<gene>
    <name evidence="1" type="primary">darP</name>
    <name type="ordered locus">APJL_0732</name>
</gene>
<proteinExistence type="inferred from homology"/>